<proteinExistence type="inferred from homology"/>
<accession>B7UIV7</accession>
<feature type="chain" id="PRO_1000146255" description="Surface composition regulator">
    <location>
        <begin position="1"/>
        <end position="66"/>
    </location>
</feature>
<reference key="1">
    <citation type="journal article" date="2009" name="J. Bacteriol.">
        <title>Complete genome sequence and comparative genome analysis of enteropathogenic Escherichia coli O127:H6 strain E2348/69.</title>
        <authorList>
            <person name="Iguchi A."/>
            <person name="Thomson N.R."/>
            <person name="Ogura Y."/>
            <person name="Saunders D."/>
            <person name="Ooka T."/>
            <person name="Henderson I.R."/>
            <person name="Harris D."/>
            <person name="Asadulghani M."/>
            <person name="Kurokawa K."/>
            <person name="Dean P."/>
            <person name="Kenny B."/>
            <person name="Quail M.A."/>
            <person name="Thurston S."/>
            <person name="Dougan G."/>
            <person name="Hayashi T."/>
            <person name="Parkhill J."/>
            <person name="Frankel G."/>
        </authorList>
    </citation>
    <scope>NUCLEOTIDE SEQUENCE [LARGE SCALE GENOMIC DNA]</scope>
    <source>
        <strain>E2348/69 / EPEC</strain>
    </source>
</reference>
<dbReference type="EMBL" id="FM180568">
    <property type="protein sequence ID" value="CAS10890.1"/>
    <property type="molecule type" value="Genomic_DNA"/>
</dbReference>
<dbReference type="RefSeq" id="WP_001296424.1">
    <property type="nucleotide sequence ID" value="NC_011601.1"/>
</dbReference>
<dbReference type="SMR" id="B7UIV7"/>
<dbReference type="GeneID" id="75173169"/>
<dbReference type="KEGG" id="ecg:E2348C_3342"/>
<dbReference type="HOGENOM" id="CLU_185971_0_0_6"/>
<dbReference type="Proteomes" id="UP000008205">
    <property type="component" value="Chromosome"/>
</dbReference>
<dbReference type="GO" id="GO:1902201">
    <property type="term" value="P:negative regulation of bacterial-type flagellum-dependent cell motility"/>
    <property type="evidence" value="ECO:0007669"/>
    <property type="project" value="UniProtKB-UniRule"/>
</dbReference>
<dbReference type="GO" id="GO:1900191">
    <property type="term" value="P:negative regulation of single-species biofilm formation"/>
    <property type="evidence" value="ECO:0007669"/>
    <property type="project" value="UniProtKB-UniRule"/>
</dbReference>
<dbReference type="FunFam" id="1.20.970.20:FF:000001">
    <property type="entry name" value="Surface composition regulator"/>
    <property type="match status" value="1"/>
</dbReference>
<dbReference type="Gene3D" id="1.20.970.20">
    <property type="entry name" value="Glycogen synthesis protein GlgS"/>
    <property type="match status" value="1"/>
</dbReference>
<dbReference type="HAMAP" id="MF_00525">
    <property type="entry name" value="GlgS"/>
    <property type="match status" value="1"/>
</dbReference>
<dbReference type="InterPro" id="IPR015065">
    <property type="entry name" value="GlgS"/>
</dbReference>
<dbReference type="InterPro" id="IPR036295">
    <property type="entry name" value="GlgS_sf"/>
</dbReference>
<dbReference type="NCBIfam" id="NF002793">
    <property type="entry name" value="PRK02922.1"/>
    <property type="match status" value="1"/>
</dbReference>
<dbReference type="Pfam" id="PF08971">
    <property type="entry name" value="GlgS"/>
    <property type="match status" value="1"/>
</dbReference>
<dbReference type="SUPFAM" id="SSF109747">
    <property type="entry name" value="Glycogen synthesis protein GlgS"/>
    <property type="match status" value="1"/>
</dbReference>
<evidence type="ECO:0000255" key="1">
    <source>
        <dbReference type="HAMAP-Rule" id="MF_00525"/>
    </source>
</evidence>
<organism>
    <name type="scientific">Escherichia coli O127:H6 (strain E2348/69 / EPEC)</name>
    <dbReference type="NCBI Taxonomy" id="574521"/>
    <lineage>
        <taxon>Bacteria</taxon>
        <taxon>Pseudomonadati</taxon>
        <taxon>Pseudomonadota</taxon>
        <taxon>Gammaproteobacteria</taxon>
        <taxon>Enterobacterales</taxon>
        <taxon>Enterobacteriaceae</taxon>
        <taxon>Escherichia</taxon>
    </lineage>
</organism>
<protein>
    <recommendedName>
        <fullName evidence="1">Surface composition regulator</fullName>
    </recommendedName>
</protein>
<name>GLGS_ECO27</name>
<sequence length="66" mass="7922">MDHSLNSLNNFDFLARSFARMHAEGRPVDILAVTGNMDEEHRTWFCARYAWYCQQMMQTRELELEH</sequence>
<comment type="function">
    <text evidence="1">Major determinant of cell surface composition. Negatively regulates motility, adhesion and synthesis of biofilm exopolysaccharides.</text>
</comment>
<comment type="similarity">
    <text evidence="1">Belongs to the GlgS family.</text>
</comment>
<keyword id="KW-1185">Reference proteome</keyword>
<gene>
    <name evidence="1" type="primary">glgS</name>
    <name type="ordered locus">E2348C_3342</name>
</gene>